<evidence type="ECO:0000255" key="1">
    <source>
        <dbReference type="HAMAP-Rule" id="MF_00145"/>
    </source>
</evidence>
<gene>
    <name evidence="1" type="primary">pgk</name>
    <name type="ordered locus">Tgr7_2891</name>
</gene>
<protein>
    <recommendedName>
        <fullName evidence="1">Phosphoglycerate kinase</fullName>
        <ecNumber evidence="1">2.7.2.3</ecNumber>
    </recommendedName>
</protein>
<accession>B8GP44</accession>
<sequence length="392" mass="41117">MSVIKMTDLDLAGKRVLIREDLNVPVKDGKVTSDARIRASLPTIEHAMKAGAKVMLMSHLGRPEEGVFSEEDSLKPVAEHLSGLLGKEVRLVRDYLDGVDVADGEVVLLENVRFNKGEKKNEEGLSRKYAALCDVYVMDAFGTAHRAQASTHGAGQYAPVACAGPLLAAELEALGKALDNPKRPLVAIVGGSKVSTKLTVLESLSKVVDQLIVGGGIANTFIAAQGHPVGKSLYEADLVDEAKRLMAAAKAKGGDIPVPTDVVTGKEFSESTPASTKRVSEVAADDMIFDVGPDTAASYADMLRKAGTIVWNGPVGVFEFDQFAAGTKALGEAIADSDGFSIAGGGDTLAAIDKYGLASRISYISTGGGAFLEFLEGKKLPAVAMLEERAKG</sequence>
<comment type="catalytic activity">
    <reaction evidence="1">
        <text>(2R)-3-phosphoglycerate + ATP = (2R)-3-phospho-glyceroyl phosphate + ADP</text>
        <dbReference type="Rhea" id="RHEA:14801"/>
        <dbReference type="ChEBI" id="CHEBI:30616"/>
        <dbReference type="ChEBI" id="CHEBI:57604"/>
        <dbReference type="ChEBI" id="CHEBI:58272"/>
        <dbReference type="ChEBI" id="CHEBI:456216"/>
        <dbReference type="EC" id="2.7.2.3"/>
    </reaction>
</comment>
<comment type="pathway">
    <text evidence="1">Carbohydrate degradation; glycolysis; pyruvate from D-glyceraldehyde 3-phosphate: step 2/5.</text>
</comment>
<comment type="subunit">
    <text evidence="1">Monomer.</text>
</comment>
<comment type="subcellular location">
    <subcellularLocation>
        <location evidence="1">Cytoplasm</location>
    </subcellularLocation>
</comment>
<comment type="similarity">
    <text evidence="1">Belongs to the phosphoglycerate kinase family.</text>
</comment>
<feature type="chain" id="PRO_1000192859" description="Phosphoglycerate kinase">
    <location>
        <begin position="1"/>
        <end position="392"/>
    </location>
</feature>
<feature type="binding site" evidence="1">
    <location>
        <begin position="21"/>
        <end position="23"/>
    </location>
    <ligand>
        <name>substrate</name>
    </ligand>
</feature>
<feature type="binding site" evidence="1">
    <location>
        <position position="36"/>
    </location>
    <ligand>
        <name>substrate</name>
    </ligand>
</feature>
<feature type="binding site" evidence="1">
    <location>
        <begin position="59"/>
        <end position="62"/>
    </location>
    <ligand>
        <name>substrate</name>
    </ligand>
</feature>
<feature type="binding site" evidence="1">
    <location>
        <position position="113"/>
    </location>
    <ligand>
        <name>substrate</name>
    </ligand>
</feature>
<feature type="binding site" evidence="1">
    <location>
        <position position="146"/>
    </location>
    <ligand>
        <name>substrate</name>
    </ligand>
</feature>
<feature type="binding site" evidence="1">
    <location>
        <position position="197"/>
    </location>
    <ligand>
        <name>ATP</name>
        <dbReference type="ChEBI" id="CHEBI:30616"/>
    </ligand>
</feature>
<feature type="binding site" evidence="1">
    <location>
        <position position="319"/>
    </location>
    <ligand>
        <name>ATP</name>
        <dbReference type="ChEBI" id="CHEBI:30616"/>
    </ligand>
</feature>
<feature type="binding site" evidence="1">
    <location>
        <begin position="345"/>
        <end position="348"/>
    </location>
    <ligand>
        <name>ATP</name>
        <dbReference type="ChEBI" id="CHEBI:30616"/>
    </ligand>
</feature>
<proteinExistence type="inferred from homology"/>
<name>PGK_THISH</name>
<reference key="1">
    <citation type="journal article" date="2011" name="Stand. Genomic Sci.">
        <title>Complete genome sequence of 'Thioalkalivibrio sulfidophilus' HL-EbGr7.</title>
        <authorList>
            <person name="Muyzer G."/>
            <person name="Sorokin D.Y."/>
            <person name="Mavromatis K."/>
            <person name="Lapidus A."/>
            <person name="Clum A."/>
            <person name="Ivanova N."/>
            <person name="Pati A."/>
            <person name="d'Haeseleer P."/>
            <person name="Woyke T."/>
            <person name="Kyrpides N.C."/>
        </authorList>
    </citation>
    <scope>NUCLEOTIDE SEQUENCE [LARGE SCALE GENOMIC DNA]</scope>
    <source>
        <strain>HL-EbGR7</strain>
    </source>
</reference>
<organism>
    <name type="scientific">Thioalkalivibrio sulfidiphilus (strain HL-EbGR7)</name>
    <dbReference type="NCBI Taxonomy" id="396588"/>
    <lineage>
        <taxon>Bacteria</taxon>
        <taxon>Pseudomonadati</taxon>
        <taxon>Pseudomonadota</taxon>
        <taxon>Gammaproteobacteria</taxon>
        <taxon>Chromatiales</taxon>
        <taxon>Ectothiorhodospiraceae</taxon>
        <taxon>Thioalkalivibrio</taxon>
    </lineage>
</organism>
<dbReference type="EC" id="2.7.2.3" evidence="1"/>
<dbReference type="EMBL" id="CP001339">
    <property type="protein sequence ID" value="ACL73964.1"/>
    <property type="molecule type" value="Genomic_DNA"/>
</dbReference>
<dbReference type="RefSeq" id="WP_012639427.1">
    <property type="nucleotide sequence ID" value="NC_011901.1"/>
</dbReference>
<dbReference type="SMR" id="B8GP44"/>
<dbReference type="STRING" id="396588.Tgr7_2891"/>
<dbReference type="KEGG" id="tgr:Tgr7_2891"/>
<dbReference type="eggNOG" id="COG0126">
    <property type="taxonomic scope" value="Bacteria"/>
</dbReference>
<dbReference type="HOGENOM" id="CLU_025427_0_2_6"/>
<dbReference type="OrthoDB" id="9808460at2"/>
<dbReference type="UniPathway" id="UPA00109">
    <property type="reaction ID" value="UER00185"/>
</dbReference>
<dbReference type="Proteomes" id="UP000002383">
    <property type="component" value="Chromosome"/>
</dbReference>
<dbReference type="GO" id="GO:0005829">
    <property type="term" value="C:cytosol"/>
    <property type="evidence" value="ECO:0007669"/>
    <property type="project" value="TreeGrafter"/>
</dbReference>
<dbReference type="GO" id="GO:0043531">
    <property type="term" value="F:ADP binding"/>
    <property type="evidence" value="ECO:0007669"/>
    <property type="project" value="TreeGrafter"/>
</dbReference>
<dbReference type="GO" id="GO:0005524">
    <property type="term" value="F:ATP binding"/>
    <property type="evidence" value="ECO:0007669"/>
    <property type="project" value="UniProtKB-KW"/>
</dbReference>
<dbReference type="GO" id="GO:0004618">
    <property type="term" value="F:phosphoglycerate kinase activity"/>
    <property type="evidence" value="ECO:0007669"/>
    <property type="project" value="UniProtKB-UniRule"/>
</dbReference>
<dbReference type="GO" id="GO:0006094">
    <property type="term" value="P:gluconeogenesis"/>
    <property type="evidence" value="ECO:0007669"/>
    <property type="project" value="TreeGrafter"/>
</dbReference>
<dbReference type="GO" id="GO:0006096">
    <property type="term" value="P:glycolytic process"/>
    <property type="evidence" value="ECO:0007669"/>
    <property type="project" value="UniProtKB-UniRule"/>
</dbReference>
<dbReference type="FunFam" id="3.40.50.1260:FF:000001">
    <property type="entry name" value="Phosphoglycerate kinase"/>
    <property type="match status" value="1"/>
</dbReference>
<dbReference type="FunFam" id="3.40.50.1260:FF:000002">
    <property type="entry name" value="Phosphoglycerate kinase"/>
    <property type="match status" value="1"/>
</dbReference>
<dbReference type="Gene3D" id="3.40.50.1260">
    <property type="entry name" value="Phosphoglycerate kinase, N-terminal domain"/>
    <property type="match status" value="2"/>
</dbReference>
<dbReference type="HAMAP" id="MF_00145">
    <property type="entry name" value="Phosphoglyc_kinase"/>
    <property type="match status" value="1"/>
</dbReference>
<dbReference type="InterPro" id="IPR001576">
    <property type="entry name" value="Phosphoglycerate_kinase"/>
</dbReference>
<dbReference type="InterPro" id="IPR015911">
    <property type="entry name" value="Phosphoglycerate_kinase_CS"/>
</dbReference>
<dbReference type="InterPro" id="IPR015824">
    <property type="entry name" value="Phosphoglycerate_kinase_N"/>
</dbReference>
<dbReference type="InterPro" id="IPR036043">
    <property type="entry name" value="Phosphoglycerate_kinase_sf"/>
</dbReference>
<dbReference type="PANTHER" id="PTHR11406">
    <property type="entry name" value="PHOSPHOGLYCERATE KINASE"/>
    <property type="match status" value="1"/>
</dbReference>
<dbReference type="PANTHER" id="PTHR11406:SF23">
    <property type="entry name" value="PHOSPHOGLYCERATE KINASE 1, CHLOROPLASTIC-RELATED"/>
    <property type="match status" value="1"/>
</dbReference>
<dbReference type="Pfam" id="PF00162">
    <property type="entry name" value="PGK"/>
    <property type="match status" value="1"/>
</dbReference>
<dbReference type="PIRSF" id="PIRSF000724">
    <property type="entry name" value="Pgk"/>
    <property type="match status" value="1"/>
</dbReference>
<dbReference type="PRINTS" id="PR00477">
    <property type="entry name" value="PHGLYCKINASE"/>
</dbReference>
<dbReference type="SUPFAM" id="SSF53748">
    <property type="entry name" value="Phosphoglycerate kinase"/>
    <property type="match status" value="1"/>
</dbReference>
<dbReference type="PROSITE" id="PS00111">
    <property type="entry name" value="PGLYCERATE_KINASE"/>
    <property type="match status" value="1"/>
</dbReference>
<keyword id="KW-0067">ATP-binding</keyword>
<keyword id="KW-0963">Cytoplasm</keyword>
<keyword id="KW-0324">Glycolysis</keyword>
<keyword id="KW-0418">Kinase</keyword>
<keyword id="KW-0547">Nucleotide-binding</keyword>
<keyword id="KW-1185">Reference proteome</keyword>
<keyword id="KW-0808">Transferase</keyword>